<organism>
    <name type="scientific">Latilactobacillus sakei subsp. sakei (strain 23K)</name>
    <name type="common">Lactobacillus sakei subsp. sakei</name>
    <dbReference type="NCBI Taxonomy" id="314315"/>
    <lineage>
        <taxon>Bacteria</taxon>
        <taxon>Bacillati</taxon>
        <taxon>Bacillota</taxon>
        <taxon>Bacilli</taxon>
        <taxon>Lactobacillales</taxon>
        <taxon>Lactobacillaceae</taxon>
        <taxon>Latilactobacillus</taxon>
    </lineage>
</organism>
<accession>Q38WK4</accession>
<name>ATPG_LATSS</name>
<dbReference type="EMBL" id="CR936503">
    <property type="protein sequence ID" value="CAI55428.1"/>
    <property type="molecule type" value="Genomic_DNA"/>
</dbReference>
<dbReference type="RefSeq" id="WP_011374826.1">
    <property type="nucleotide sequence ID" value="NC_007576.1"/>
</dbReference>
<dbReference type="SMR" id="Q38WK4"/>
<dbReference type="STRING" id="314315.LCA_1127"/>
<dbReference type="KEGG" id="lsa:LCA_1127"/>
<dbReference type="eggNOG" id="COG0224">
    <property type="taxonomic scope" value="Bacteria"/>
</dbReference>
<dbReference type="HOGENOM" id="CLU_050669_0_1_9"/>
<dbReference type="OrthoDB" id="9812769at2"/>
<dbReference type="Proteomes" id="UP000002707">
    <property type="component" value="Chromosome"/>
</dbReference>
<dbReference type="GO" id="GO:0005886">
    <property type="term" value="C:plasma membrane"/>
    <property type="evidence" value="ECO:0007669"/>
    <property type="project" value="UniProtKB-SubCell"/>
</dbReference>
<dbReference type="GO" id="GO:0045259">
    <property type="term" value="C:proton-transporting ATP synthase complex"/>
    <property type="evidence" value="ECO:0007669"/>
    <property type="project" value="UniProtKB-KW"/>
</dbReference>
<dbReference type="GO" id="GO:0005524">
    <property type="term" value="F:ATP binding"/>
    <property type="evidence" value="ECO:0007669"/>
    <property type="project" value="UniProtKB-UniRule"/>
</dbReference>
<dbReference type="GO" id="GO:0046933">
    <property type="term" value="F:proton-transporting ATP synthase activity, rotational mechanism"/>
    <property type="evidence" value="ECO:0007669"/>
    <property type="project" value="UniProtKB-UniRule"/>
</dbReference>
<dbReference type="GO" id="GO:0042777">
    <property type="term" value="P:proton motive force-driven plasma membrane ATP synthesis"/>
    <property type="evidence" value="ECO:0007669"/>
    <property type="project" value="UniProtKB-UniRule"/>
</dbReference>
<dbReference type="CDD" id="cd12151">
    <property type="entry name" value="F1-ATPase_gamma"/>
    <property type="match status" value="1"/>
</dbReference>
<dbReference type="Gene3D" id="3.40.1380.10">
    <property type="match status" value="1"/>
</dbReference>
<dbReference type="Gene3D" id="1.10.287.80">
    <property type="entry name" value="ATP synthase, gamma subunit, helix hairpin domain"/>
    <property type="match status" value="2"/>
</dbReference>
<dbReference type="HAMAP" id="MF_00815">
    <property type="entry name" value="ATP_synth_gamma_bact"/>
    <property type="match status" value="1"/>
</dbReference>
<dbReference type="InterPro" id="IPR035968">
    <property type="entry name" value="ATP_synth_F1_ATPase_gsu"/>
</dbReference>
<dbReference type="InterPro" id="IPR000131">
    <property type="entry name" value="ATP_synth_F1_gsu"/>
</dbReference>
<dbReference type="InterPro" id="IPR023632">
    <property type="entry name" value="ATP_synth_F1_gsu_CS"/>
</dbReference>
<dbReference type="NCBIfam" id="TIGR01146">
    <property type="entry name" value="ATPsyn_F1gamma"/>
    <property type="match status" value="1"/>
</dbReference>
<dbReference type="NCBIfam" id="NF004147">
    <property type="entry name" value="PRK05621.2-1"/>
    <property type="match status" value="1"/>
</dbReference>
<dbReference type="PANTHER" id="PTHR11693">
    <property type="entry name" value="ATP SYNTHASE GAMMA CHAIN"/>
    <property type="match status" value="1"/>
</dbReference>
<dbReference type="PANTHER" id="PTHR11693:SF22">
    <property type="entry name" value="ATP SYNTHASE SUBUNIT GAMMA, MITOCHONDRIAL"/>
    <property type="match status" value="1"/>
</dbReference>
<dbReference type="Pfam" id="PF00231">
    <property type="entry name" value="ATP-synt"/>
    <property type="match status" value="1"/>
</dbReference>
<dbReference type="PRINTS" id="PR00126">
    <property type="entry name" value="ATPASEGAMMA"/>
</dbReference>
<dbReference type="SUPFAM" id="SSF52943">
    <property type="entry name" value="ATP synthase (F1-ATPase), gamma subunit"/>
    <property type="match status" value="1"/>
</dbReference>
<dbReference type="PROSITE" id="PS00153">
    <property type="entry name" value="ATPASE_GAMMA"/>
    <property type="match status" value="1"/>
</dbReference>
<comment type="function">
    <text evidence="1">Produces ATP from ADP in the presence of a proton gradient across the membrane. The gamma chain is believed to be important in regulating ATPase activity and the flow of protons through the CF(0) complex.</text>
</comment>
<comment type="subunit">
    <text evidence="1">F-type ATPases have 2 components, CF(1) - the catalytic core - and CF(0) - the membrane proton channel. CF(1) has five subunits: alpha(3), beta(3), gamma(1), delta(1), epsilon(1). CF(0) has three main subunits: a, b and c.</text>
</comment>
<comment type="subcellular location">
    <subcellularLocation>
        <location evidence="1">Cell membrane</location>
        <topology evidence="1">Peripheral membrane protein</topology>
    </subcellularLocation>
</comment>
<comment type="similarity">
    <text evidence="1">Belongs to the ATPase gamma chain family.</text>
</comment>
<proteinExistence type="inferred from homology"/>
<evidence type="ECO:0000255" key="1">
    <source>
        <dbReference type="HAMAP-Rule" id="MF_00815"/>
    </source>
</evidence>
<protein>
    <recommendedName>
        <fullName evidence="1">ATP synthase gamma chain</fullName>
    </recommendedName>
    <alternativeName>
        <fullName evidence="1">ATP synthase F1 sector gamma subunit</fullName>
    </alternativeName>
    <alternativeName>
        <fullName evidence="1">F-ATPase gamma subunit</fullName>
    </alternativeName>
</protein>
<feature type="chain" id="PRO_1000053240" description="ATP synthase gamma chain">
    <location>
        <begin position="1"/>
        <end position="315"/>
    </location>
</feature>
<gene>
    <name evidence="1" type="primary">atpG</name>
    <name type="ordered locus">LCA_1127</name>
</gene>
<keyword id="KW-0066">ATP synthesis</keyword>
<keyword id="KW-1003">Cell membrane</keyword>
<keyword id="KW-0139">CF(1)</keyword>
<keyword id="KW-0375">Hydrogen ion transport</keyword>
<keyword id="KW-0406">Ion transport</keyword>
<keyword id="KW-0472">Membrane</keyword>
<keyword id="KW-1185">Reference proteome</keyword>
<keyword id="KW-0813">Transport</keyword>
<reference key="1">
    <citation type="journal article" date="2005" name="Nat. Biotechnol.">
        <title>The complete genome sequence of the meat-borne lactic acid bacterium Lactobacillus sakei 23K.</title>
        <authorList>
            <person name="Chaillou S."/>
            <person name="Champomier-Verges M.-C."/>
            <person name="Cornet M."/>
            <person name="Crutz-Le Coq A.-M."/>
            <person name="Dudez A.-M."/>
            <person name="Martin V."/>
            <person name="Beaufils S."/>
            <person name="Darbon-Rongere E."/>
            <person name="Bossy R."/>
            <person name="Loux V."/>
            <person name="Zagorec M."/>
        </authorList>
    </citation>
    <scope>NUCLEOTIDE SEQUENCE [LARGE SCALE GENOMIC DNA]</scope>
    <source>
        <strain>23K</strain>
    </source>
</reference>
<sequence>MAESLMDIKRRIASTKKTGQITSAMQMVSGAKLSQIEKNSVAYQVYTDKIREIVTHLAASQLIDIARQKSSLQAEPADSTIKKAIKHEVTLSNLLVERPIKKTGYLVITSDRGLVGAYNSSILKAMVQMISETHQSPDEYAILAVGGTGADFFKARGMNLTYEYRGVSDVPSFEEVKQIIKTAVAMYDNGVYDELYVCYNHHVNSLTSGFRAEKMLPITDLDVSEVADQNLEYITEPSVDDALDAILPQYAESLIYGAMLDSKTAEHAASMAAMKSATDNANNLISELSIKYNRARQAQITTEITEIVGGAAALE</sequence>